<comment type="function">
    <text>Electron carrier protein. The oxidized form of the cytochrome c heme group can accept an electron from the heme group of the cytochrome c1 subunit of cytochrome reductase. Cytochrome c then transfers this electron to the cytochrome oxidase complex, the final protein carrier in the mitochondrial electron-transport chain.</text>
</comment>
<comment type="subcellular location">
    <subcellularLocation>
        <location>Mitochondrion intermembrane space</location>
    </subcellularLocation>
    <text>Loosely associated with the inner membrane.</text>
</comment>
<comment type="PTM">
    <text>Binds 1 heme c group covalently per subunit.</text>
</comment>
<comment type="similarity">
    <text evidence="2">Belongs to the cytochrome c family.</text>
</comment>
<comment type="online information" name="Protein Spotlight">
    <link uri="https://www.proteinspotlight.org/back_issues/076"/>
    <text>Life shuttle - Issue 76 of November 2006</text>
</comment>
<evidence type="ECO:0000269" key="1">
    <source>
    </source>
</evidence>
<evidence type="ECO:0000305" key="2"/>
<proteinExistence type="evidence at protein level"/>
<sequence length="105" mass="11769">MGDVEKGKKIFVQKCSQCHTVEKGGKHKTGPNLHQLFGRKTGEAEGFSYTAANKNKGITWGEDTLFEYLENPKKYIPGTKMIFAGIKKKTERDDLIAYLKEATAK</sequence>
<dbReference type="SMR" id="P21665"/>
<dbReference type="iPTMnet" id="P21665"/>
<dbReference type="GO" id="GO:0005758">
    <property type="term" value="C:mitochondrial intermembrane space"/>
    <property type="evidence" value="ECO:0007669"/>
    <property type="project" value="UniProtKB-SubCell"/>
</dbReference>
<dbReference type="GO" id="GO:0009055">
    <property type="term" value="F:electron transfer activity"/>
    <property type="evidence" value="ECO:0007669"/>
    <property type="project" value="InterPro"/>
</dbReference>
<dbReference type="GO" id="GO:0020037">
    <property type="term" value="F:heme binding"/>
    <property type="evidence" value="ECO:0007669"/>
    <property type="project" value="InterPro"/>
</dbReference>
<dbReference type="GO" id="GO:0046872">
    <property type="term" value="F:metal ion binding"/>
    <property type="evidence" value="ECO:0007669"/>
    <property type="project" value="UniProtKB-KW"/>
</dbReference>
<dbReference type="FunFam" id="1.10.760.10:FF:000008">
    <property type="entry name" value="Cytochrome c"/>
    <property type="match status" value="1"/>
</dbReference>
<dbReference type="Gene3D" id="1.10.760.10">
    <property type="entry name" value="Cytochrome c-like domain"/>
    <property type="match status" value="1"/>
</dbReference>
<dbReference type="InterPro" id="IPR009056">
    <property type="entry name" value="Cyt_c-like_dom"/>
</dbReference>
<dbReference type="InterPro" id="IPR036909">
    <property type="entry name" value="Cyt_c-like_dom_sf"/>
</dbReference>
<dbReference type="InterPro" id="IPR002327">
    <property type="entry name" value="Cyt_c_1A/1B"/>
</dbReference>
<dbReference type="PANTHER" id="PTHR11961">
    <property type="entry name" value="CYTOCHROME C"/>
    <property type="match status" value="1"/>
</dbReference>
<dbReference type="Pfam" id="PF00034">
    <property type="entry name" value="Cytochrom_C"/>
    <property type="match status" value="1"/>
</dbReference>
<dbReference type="PRINTS" id="PR00604">
    <property type="entry name" value="CYTCHRMECIAB"/>
</dbReference>
<dbReference type="SUPFAM" id="SSF46626">
    <property type="entry name" value="Cytochrome c"/>
    <property type="match status" value="1"/>
</dbReference>
<dbReference type="PROSITE" id="PS51007">
    <property type="entry name" value="CYTC"/>
    <property type="match status" value="1"/>
</dbReference>
<name>CYC_VARVA</name>
<organism>
    <name type="scientific">Varanus varius</name>
    <name type="common">Lace monitor lizard</name>
    <name type="synonym">Lacerta varia</name>
    <dbReference type="NCBI Taxonomy" id="8559"/>
    <lineage>
        <taxon>Eukaryota</taxon>
        <taxon>Metazoa</taxon>
        <taxon>Chordata</taxon>
        <taxon>Craniata</taxon>
        <taxon>Vertebrata</taxon>
        <taxon>Euteleostomi</taxon>
        <taxon>Lepidosauria</taxon>
        <taxon>Squamata</taxon>
        <taxon>Bifurcata</taxon>
        <taxon>Unidentata</taxon>
        <taxon>Episquamata</taxon>
        <taxon>Toxicofera</taxon>
        <taxon>Anguimorpha</taxon>
        <taxon>Paleoanguimorpha</taxon>
        <taxon>Varanoidea</taxon>
        <taxon>Varanidae</taxon>
        <taxon>Varanus</taxon>
    </lineage>
</organism>
<keyword id="KW-0007">Acetylation</keyword>
<keyword id="KW-0903">Direct protein sequencing</keyword>
<keyword id="KW-0249">Electron transport</keyword>
<keyword id="KW-0349">Heme</keyword>
<keyword id="KW-0408">Iron</keyword>
<keyword id="KW-0479">Metal-binding</keyword>
<keyword id="KW-0496">Mitochondrion</keyword>
<keyword id="KW-0679">Respiratory chain</keyword>
<keyword id="KW-0813">Transport</keyword>
<reference key="1">
    <citation type="journal article" date="1991" name="Biochem. J.">
        <title>Rattlesnake cytochrome c. A re-appraisal of the reported amino acid sequence.</title>
        <authorList>
            <person name="Ambler R.P."/>
            <person name="Daniel M."/>
        </authorList>
    </citation>
    <scope>PROTEIN SEQUENCE OF 2-105</scope>
    <scope>ACETYLATION AT GLY-2</scope>
</reference>
<accession>P21665</accession>
<feature type="initiator methionine" description="Removed" evidence="1">
    <location>
        <position position="1"/>
    </location>
</feature>
<feature type="chain" id="PRO_0000108248" description="Cytochrome c">
    <location>
        <begin position="2"/>
        <end position="105"/>
    </location>
</feature>
<feature type="binding site" description="covalent">
    <location>
        <position position="15"/>
    </location>
    <ligand>
        <name>heme c</name>
        <dbReference type="ChEBI" id="CHEBI:61717"/>
    </ligand>
</feature>
<feature type="binding site" description="covalent">
    <location>
        <position position="18"/>
    </location>
    <ligand>
        <name>heme c</name>
        <dbReference type="ChEBI" id="CHEBI:61717"/>
    </ligand>
</feature>
<feature type="binding site" description="axial binding residue">
    <location>
        <position position="19"/>
    </location>
    <ligand>
        <name>heme c</name>
        <dbReference type="ChEBI" id="CHEBI:61717"/>
    </ligand>
    <ligandPart>
        <name>Fe</name>
        <dbReference type="ChEBI" id="CHEBI:18248"/>
    </ligandPart>
</feature>
<feature type="binding site" description="axial binding residue">
    <location>
        <position position="81"/>
    </location>
    <ligand>
        <name>heme c</name>
        <dbReference type="ChEBI" id="CHEBI:61717"/>
    </ligand>
    <ligandPart>
        <name>Fe</name>
        <dbReference type="ChEBI" id="CHEBI:18248"/>
    </ligandPart>
</feature>
<feature type="modified residue" description="N-acetylglycine" evidence="1">
    <location>
        <position position="2"/>
    </location>
</feature>
<protein>
    <recommendedName>
        <fullName>Cytochrome c</fullName>
    </recommendedName>
</protein>